<dbReference type="EC" id="7.6.2.10" evidence="1"/>
<dbReference type="EMBL" id="AM167904">
    <property type="protein sequence ID" value="CAJ49511.1"/>
    <property type="molecule type" value="Genomic_DNA"/>
</dbReference>
<dbReference type="RefSeq" id="WP_012417570.1">
    <property type="nucleotide sequence ID" value="NC_010645.1"/>
</dbReference>
<dbReference type="SMR" id="Q2L0H5"/>
<dbReference type="STRING" id="360910.BAV1902"/>
<dbReference type="KEGG" id="bav:BAV1902"/>
<dbReference type="eggNOG" id="COG3842">
    <property type="taxonomic scope" value="Bacteria"/>
</dbReference>
<dbReference type="HOGENOM" id="CLU_000604_1_1_4"/>
<dbReference type="OrthoDB" id="5298774at2"/>
<dbReference type="Proteomes" id="UP000001977">
    <property type="component" value="Chromosome"/>
</dbReference>
<dbReference type="GO" id="GO:0055052">
    <property type="term" value="C:ATP-binding cassette (ABC) transporter complex, substrate-binding subunit-containing"/>
    <property type="evidence" value="ECO:0007669"/>
    <property type="project" value="TreeGrafter"/>
</dbReference>
<dbReference type="GO" id="GO:0015430">
    <property type="term" value="F:ABC-type glycerol-3-phosphate transporter activity"/>
    <property type="evidence" value="ECO:0007669"/>
    <property type="project" value="UniProtKB-EC"/>
</dbReference>
<dbReference type="GO" id="GO:0005524">
    <property type="term" value="F:ATP binding"/>
    <property type="evidence" value="ECO:0007669"/>
    <property type="project" value="UniProtKB-KW"/>
</dbReference>
<dbReference type="GO" id="GO:0016887">
    <property type="term" value="F:ATP hydrolysis activity"/>
    <property type="evidence" value="ECO:0007669"/>
    <property type="project" value="InterPro"/>
</dbReference>
<dbReference type="GO" id="GO:0008643">
    <property type="term" value="P:carbohydrate transport"/>
    <property type="evidence" value="ECO:0007669"/>
    <property type="project" value="InterPro"/>
</dbReference>
<dbReference type="GO" id="GO:0001407">
    <property type="term" value="P:glycerophosphodiester transmembrane transport"/>
    <property type="evidence" value="ECO:0007669"/>
    <property type="project" value="TreeGrafter"/>
</dbReference>
<dbReference type="CDD" id="cd03301">
    <property type="entry name" value="ABC_MalK_N"/>
    <property type="match status" value="1"/>
</dbReference>
<dbReference type="FunFam" id="3.40.50.300:FF:000042">
    <property type="entry name" value="Maltose/maltodextrin ABC transporter, ATP-binding protein"/>
    <property type="match status" value="1"/>
</dbReference>
<dbReference type="Gene3D" id="2.40.50.100">
    <property type="match status" value="1"/>
</dbReference>
<dbReference type="Gene3D" id="2.40.50.140">
    <property type="entry name" value="Nucleic acid-binding proteins"/>
    <property type="match status" value="1"/>
</dbReference>
<dbReference type="Gene3D" id="3.40.50.300">
    <property type="entry name" value="P-loop containing nucleotide triphosphate hydrolases"/>
    <property type="match status" value="1"/>
</dbReference>
<dbReference type="InterPro" id="IPR003593">
    <property type="entry name" value="AAA+_ATPase"/>
</dbReference>
<dbReference type="InterPro" id="IPR003439">
    <property type="entry name" value="ABC_transporter-like_ATP-bd"/>
</dbReference>
<dbReference type="InterPro" id="IPR017871">
    <property type="entry name" value="ABC_transporter-like_CS"/>
</dbReference>
<dbReference type="InterPro" id="IPR015855">
    <property type="entry name" value="ABC_transpr_MalK-like"/>
</dbReference>
<dbReference type="InterPro" id="IPR047641">
    <property type="entry name" value="ABC_transpr_MalK/UgpC-like"/>
</dbReference>
<dbReference type="InterPro" id="IPR008995">
    <property type="entry name" value="Mo/tungstate-bd_C_term_dom"/>
</dbReference>
<dbReference type="InterPro" id="IPR012340">
    <property type="entry name" value="NA-bd_OB-fold"/>
</dbReference>
<dbReference type="InterPro" id="IPR040582">
    <property type="entry name" value="OB_MalK-like"/>
</dbReference>
<dbReference type="InterPro" id="IPR027417">
    <property type="entry name" value="P-loop_NTPase"/>
</dbReference>
<dbReference type="NCBIfam" id="NF008653">
    <property type="entry name" value="PRK11650.1"/>
    <property type="match status" value="1"/>
</dbReference>
<dbReference type="PANTHER" id="PTHR43875">
    <property type="entry name" value="MALTODEXTRIN IMPORT ATP-BINDING PROTEIN MSMX"/>
    <property type="match status" value="1"/>
</dbReference>
<dbReference type="PANTHER" id="PTHR43875:SF12">
    <property type="entry name" value="SN-GLYCEROL-3-PHOSPHATE IMPORT ATP-BINDING PROTEIN UGPC"/>
    <property type="match status" value="1"/>
</dbReference>
<dbReference type="Pfam" id="PF00005">
    <property type="entry name" value="ABC_tran"/>
    <property type="match status" value="1"/>
</dbReference>
<dbReference type="Pfam" id="PF17912">
    <property type="entry name" value="OB_MalK"/>
    <property type="match status" value="1"/>
</dbReference>
<dbReference type="SMART" id="SM00382">
    <property type="entry name" value="AAA"/>
    <property type="match status" value="1"/>
</dbReference>
<dbReference type="SUPFAM" id="SSF50331">
    <property type="entry name" value="MOP-like"/>
    <property type="match status" value="1"/>
</dbReference>
<dbReference type="SUPFAM" id="SSF52540">
    <property type="entry name" value="P-loop containing nucleoside triphosphate hydrolases"/>
    <property type="match status" value="1"/>
</dbReference>
<dbReference type="PROSITE" id="PS00211">
    <property type="entry name" value="ABC_TRANSPORTER_1"/>
    <property type="match status" value="1"/>
</dbReference>
<dbReference type="PROSITE" id="PS50893">
    <property type="entry name" value="ABC_TRANSPORTER_2"/>
    <property type="match status" value="1"/>
</dbReference>
<dbReference type="PROSITE" id="PS51315">
    <property type="entry name" value="UGPC"/>
    <property type="match status" value="1"/>
</dbReference>
<protein>
    <recommendedName>
        <fullName evidence="1">sn-glycerol-3-phosphate import ATP-binding protein UgpC</fullName>
        <ecNumber evidence="1">7.6.2.10</ecNumber>
    </recommendedName>
</protein>
<proteinExistence type="inferred from homology"/>
<feature type="chain" id="PRO_0000289729" description="sn-glycerol-3-phosphate import ATP-binding protein UgpC">
    <location>
        <begin position="1"/>
        <end position="361"/>
    </location>
</feature>
<feature type="domain" description="ABC transporter" evidence="1">
    <location>
        <begin position="4"/>
        <end position="235"/>
    </location>
</feature>
<feature type="binding site" evidence="1">
    <location>
        <begin position="37"/>
        <end position="44"/>
    </location>
    <ligand>
        <name>ATP</name>
        <dbReference type="ChEBI" id="CHEBI:30616"/>
    </ligand>
</feature>
<accession>Q2L0H5</accession>
<keyword id="KW-0067">ATP-binding</keyword>
<keyword id="KW-0997">Cell inner membrane</keyword>
<keyword id="KW-1003">Cell membrane</keyword>
<keyword id="KW-0472">Membrane</keyword>
<keyword id="KW-0547">Nucleotide-binding</keyword>
<keyword id="KW-1185">Reference proteome</keyword>
<keyword id="KW-0762">Sugar transport</keyword>
<keyword id="KW-1278">Translocase</keyword>
<keyword id="KW-0813">Transport</keyword>
<comment type="function">
    <text evidence="1">Part of the ABC transporter complex UgpBAEC involved in sn-glycerol-3-phosphate (G3P) import. Responsible for energy coupling to the transport system.</text>
</comment>
<comment type="catalytic activity">
    <reaction evidence="1">
        <text>sn-glycerol 3-phosphate(out) + ATP + H2O = sn-glycerol 3-phosphate(in) + ADP + phosphate + H(+)</text>
        <dbReference type="Rhea" id="RHEA:21668"/>
        <dbReference type="ChEBI" id="CHEBI:15377"/>
        <dbReference type="ChEBI" id="CHEBI:15378"/>
        <dbReference type="ChEBI" id="CHEBI:30616"/>
        <dbReference type="ChEBI" id="CHEBI:43474"/>
        <dbReference type="ChEBI" id="CHEBI:57597"/>
        <dbReference type="ChEBI" id="CHEBI:456216"/>
        <dbReference type="EC" id="7.6.2.10"/>
    </reaction>
</comment>
<comment type="subunit">
    <text evidence="1">The complex is composed of two ATP-binding proteins (UgpC), two transmembrane proteins (UgpA and UgpE) and a solute-binding protein (UgpB).</text>
</comment>
<comment type="subcellular location">
    <subcellularLocation>
        <location evidence="1">Cell inner membrane</location>
        <topology evidence="1">Peripheral membrane protein</topology>
    </subcellularLocation>
</comment>
<comment type="similarity">
    <text evidence="1">Belongs to the ABC transporter superfamily. sn-glycerol-3-phosphate importer (TC 3.A.1.1.3) family.</text>
</comment>
<organism>
    <name type="scientific">Bordetella avium (strain 197N)</name>
    <dbReference type="NCBI Taxonomy" id="360910"/>
    <lineage>
        <taxon>Bacteria</taxon>
        <taxon>Pseudomonadati</taxon>
        <taxon>Pseudomonadota</taxon>
        <taxon>Betaproteobacteria</taxon>
        <taxon>Burkholderiales</taxon>
        <taxon>Alcaligenaceae</taxon>
        <taxon>Bordetella</taxon>
    </lineage>
</organism>
<evidence type="ECO:0000255" key="1">
    <source>
        <dbReference type="HAMAP-Rule" id="MF_01727"/>
    </source>
</evidence>
<reference key="1">
    <citation type="journal article" date="2006" name="J. Bacteriol.">
        <title>Comparison of the genome sequence of the poultry pathogen Bordetella avium with those of B. bronchiseptica, B. pertussis, and B. parapertussis reveals extensive diversity in surface structures associated with host interaction.</title>
        <authorList>
            <person name="Sebaihia M."/>
            <person name="Preston A."/>
            <person name="Maskell D.J."/>
            <person name="Kuzmiak H."/>
            <person name="Connell T.D."/>
            <person name="King N.D."/>
            <person name="Orndorff P.E."/>
            <person name="Miyamoto D.M."/>
            <person name="Thomson N.R."/>
            <person name="Harris D."/>
            <person name="Goble A."/>
            <person name="Lord A."/>
            <person name="Murphy L."/>
            <person name="Quail M.A."/>
            <person name="Rutter S."/>
            <person name="Squares R."/>
            <person name="Squares S."/>
            <person name="Woodward J."/>
            <person name="Parkhill J."/>
            <person name="Temple L.M."/>
        </authorList>
    </citation>
    <scope>NUCLEOTIDE SEQUENCE [LARGE SCALE GENOMIC DNA]</scope>
    <source>
        <strain>197N</strain>
    </source>
</reference>
<gene>
    <name evidence="1" type="primary">ugpC</name>
    <name type="ordered locus">BAV1902</name>
</gene>
<sequence>MATLSFRNLKKTYAGNVPVIHGIDMEIKDGEFIVIVGPSGCGKSTLMRMVAGLETVTSGEILIDDKPVNDLEPAERDIAMVFQNYALYPHMSVFENMAYGLKIRKVPKAEIQKRVEEAAQILELGKLLDRRPRQLSGGQRQRVAMGRAIVREPKVFLFDEPLSNLDAKLRVAMRLEILKLHRRLHTTSLYVTHDQVEAMTLAHRMVVMYQGVPEQIGTPMEVFEKPASTFVAGFIGSPPMNLIEVDVAGDGTMTAEGMPLQISPLQVPSAVRGRKIIMGLRPEHMLLNAEGIPVEIEMIETLGSEQLVHGRRGKHMLVVRCTTRQLSESTVKVGDTMNIGPDGRHDLHWFEPDTGRRVQGL</sequence>
<name>UGPC_BORA1</name>